<gene>
    <name evidence="1" type="primary">pepA</name>
    <name type="ordered locus">Asuc_0952</name>
</gene>
<proteinExistence type="inferred from homology"/>
<protein>
    <recommendedName>
        <fullName evidence="1">Probable cytosol aminopeptidase</fullName>
        <ecNumber evidence="1">3.4.11.1</ecNumber>
    </recommendedName>
    <alternativeName>
        <fullName evidence="1">Leucine aminopeptidase</fullName>
        <shortName evidence="1">LAP</shortName>
        <ecNumber evidence="1">3.4.11.10</ecNumber>
    </alternativeName>
    <alternativeName>
        <fullName evidence="1">Leucyl aminopeptidase</fullName>
    </alternativeName>
</protein>
<dbReference type="EC" id="3.4.11.1" evidence="1"/>
<dbReference type="EC" id="3.4.11.10" evidence="1"/>
<dbReference type="EMBL" id="CP000746">
    <property type="protein sequence ID" value="ABR74320.1"/>
    <property type="molecule type" value="Genomic_DNA"/>
</dbReference>
<dbReference type="RefSeq" id="WP_012072697.1">
    <property type="nucleotide sequence ID" value="NC_009655.1"/>
</dbReference>
<dbReference type="SMR" id="A6VMX3"/>
<dbReference type="STRING" id="339671.Asuc_0952"/>
<dbReference type="MEROPS" id="M17.003"/>
<dbReference type="KEGG" id="asu:Asuc_0952"/>
<dbReference type="eggNOG" id="COG0260">
    <property type="taxonomic scope" value="Bacteria"/>
</dbReference>
<dbReference type="HOGENOM" id="CLU_013734_2_2_6"/>
<dbReference type="OrthoDB" id="9809354at2"/>
<dbReference type="Proteomes" id="UP000001114">
    <property type="component" value="Chromosome"/>
</dbReference>
<dbReference type="GO" id="GO:0005737">
    <property type="term" value="C:cytoplasm"/>
    <property type="evidence" value="ECO:0007669"/>
    <property type="project" value="UniProtKB-SubCell"/>
</dbReference>
<dbReference type="GO" id="GO:0030145">
    <property type="term" value="F:manganese ion binding"/>
    <property type="evidence" value="ECO:0007669"/>
    <property type="project" value="UniProtKB-UniRule"/>
</dbReference>
<dbReference type="GO" id="GO:0070006">
    <property type="term" value="F:metalloaminopeptidase activity"/>
    <property type="evidence" value="ECO:0007669"/>
    <property type="project" value="InterPro"/>
</dbReference>
<dbReference type="GO" id="GO:0006508">
    <property type="term" value="P:proteolysis"/>
    <property type="evidence" value="ECO:0007669"/>
    <property type="project" value="UniProtKB-KW"/>
</dbReference>
<dbReference type="CDD" id="cd00433">
    <property type="entry name" value="Peptidase_M17"/>
    <property type="match status" value="1"/>
</dbReference>
<dbReference type="FunFam" id="3.40.630.10:FF:000004">
    <property type="entry name" value="Probable cytosol aminopeptidase"/>
    <property type="match status" value="1"/>
</dbReference>
<dbReference type="Gene3D" id="3.40.220.10">
    <property type="entry name" value="Leucine Aminopeptidase, subunit E, domain 1"/>
    <property type="match status" value="1"/>
</dbReference>
<dbReference type="Gene3D" id="3.40.630.10">
    <property type="entry name" value="Zn peptidases"/>
    <property type="match status" value="1"/>
</dbReference>
<dbReference type="HAMAP" id="MF_00181">
    <property type="entry name" value="Cytosol_peptidase_M17"/>
    <property type="match status" value="1"/>
</dbReference>
<dbReference type="InterPro" id="IPR011356">
    <property type="entry name" value="Leucine_aapep/pepB"/>
</dbReference>
<dbReference type="InterPro" id="IPR043472">
    <property type="entry name" value="Macro_dom-like"/>
</dbReference>
<dbReference type="InterPro" id="IPR000819">
    <property type="entry name" value="Peptidase_M17_C"/>
</dbReference>
<dbReference type="InterPro" id="IPR023042">
    <property type="entry name" value="Peptidase_M17_leu_NH2_pept"/>
</dbReference>
<dbReference type="InterPro" id="IPR008283">
    <property type="entry name" value="Peptidase_M17_N"/>
</dbReference>
<dbReference type="NCBIfam" id="NF002074">
    <property type="entry name" value="PRK00913.1-4"/>
    <property type="match status" value="1"/>
</dbReference>
<dbReference type="PANTHER" id="PTHR11963:SF23">
    <property type="entry name" value="CYTOSOL AMINOPEPTIDASE"/>
    <property type="match status" value="1"/>
</dbReference>
<dbReference type="PANTHER" id="PTHR11963">
    <property type="entry name" value="LEUCINE AMINOPEPTIDASE-RELATED"/>
    <property type="match status" value="1"/>
</dbReference>
<dbReference type="Pfam" id="PF00883">
    <property type="entry name" value="Peptidase_M17"/>
    <property type="match status" value="1"/>
</dbReference>
<dbReference type="Pfam" id="PF02789">
    <property type="entry name" value="Peptidase_M17_N"/>
    <property type="match status" value="1"/>
</dbReference>
<dbReference type="PRINTS" id="PR00481">
    <property type="entry name" value="LAMNOPPTDASE"/>
</dbReference>
<dbReference type="SUPFAM" id="SSF52949">
    <property type="entry name" value="Macro domain-like"/>
    <property type="match status" value="1"/>
</dbReference>
<dbReference type="SUPFAM" id="SSF53187">
    <property type="entry name" value="Zn-dependent exopeptidases"/>
    <property type="match status" value="1"/>
</dbReference>
<dbReference type="PROSITE" id="PS00631">
    <property type="entry name" value="CYTOSOL_AP"/>
    <property type="match status" value="1"/>
</dbReference>
<sequence length="484" mass="52324">MKYSANLTALLQTDTVLVAVFEDGSLSPSAQQFDGQGEVSALLKSGDISGKIGEIATFRRQNQRIIVVGAGKPNDINERQFKQITQKAFQAVKPTSAQTLANALTEVQINGRDLYWNIRFGLETIAAESYIFDEFKSKKADPVKLRNVIFHADDKQAQLAVQHGSAIALGVKLARDIANCPPNVCNPNYLAAQAKKLEKQTALLTTAVLGEKEMAELGMHAYLGVSQGSKNEAQLSVMTYKNHPDPHAKPIVLVGKGLTFDAGGISLKPSADMDEMKYDMCGAASIFGVMNALVELQLPLNVIGVMAGCENLPDGNAYRPGDILTTMNGLTVEVLNTDAEGRLVLCDTLTYVERFEPECVVDVATLTGACVVALGQHNSGLISTNDELAEQLFRASQQTQDKAWRLPLSDEYQEQLKSPFADLANIGGRWGGAITAGAFLSNFTKQYRWAHLDIAGTAWLQGANKGATGRPVSLLTQFLINQCQ</sequence>
<feature type="chain" id="PRO_1000071652" description="Probable cytosol aminopeptidase">
    <location>
        <begin position="1"/>
        <end position="484"/>
    </location>
</feature>
<feature type="active site" evidence="1">
    <location>
        <position position="268"/>
    </location>
</feature>
<feature type="active site" evidence="1">
    <location>
        <position position="342"/>
    </location>
</feature>
<feature type="binding site" evidence="1">
    <location>
        <position position="256"/>
    </location>
    <ligand>
        <name>Mn(2+)</name>
        <dbReference type="ChEBI" id="CHEBI:29035"/>
        <label>2</label>
    </ligand>
</feature>
<feature type="binding site" evidence="1">
    <location>
        <position position="261"/>
    </location>
    <ligand>
        <name>Mn(2+)</name>
        <dbReference type="ChEBI" id="CHEBI:29035"/>
        <label>1</label>
    </ligand>
</feature>
<feature type="binding site" evidence="1">
    <location>
        <position position="261"/>
    </location>
    <ligand>
        <name>Mn(2+)</name>
        <dbReference type="ChEBI" id="CHEBI:29035"/>
        <label>2</label>
    </ligand>
</feature>
<feature type="binding site" evidence="1">
    <location>
        <position position="279"/>
    </location>
    <ligand>
        <name>Mn(2+)</name>
        <dbReference type="ChEBI" id="CHEBI:29035"/>
        <label>2</label>
    </ligand>
</feature>
<feature type="binding site" evidence="1">
    <location>
        <position position="338"/>
    </location>
    <ligand>
        <name>Mn(2+)</name>
        <dbReference type="ChEBI" id="CHEBI:29035"/>
        <label>1</label>
    </ligand>
</feature>
<feature type="binding site" evidence="1">
    <location>
        <position position="340"/>
    </location>
    <ligand>
        <name>Mn(2+)</name>
        <dbReference type="ChEBI" id="CHEBI:29035"/>
        <label>1</label>
    </ligand>
</feature>
<feature type="binding site" evidence="1">
    <location>
        <position position="340"/>
    </location>
    <ligand>
        <name>Mn(2+)</name>
        <dbReference type="ChEBI" id="CHEBI:29035"/>
        <label>2</label>
    </ligand>
</feature>
<comment type="function">
    <text evidence="1">Presumably involved in the processing and regular turnover of intracellular proteins. Catalyzes the removal of unsubstituted N-terminal amino acids from various peptides.</text>
</comment>
<comment type="catalytic activity">
    <reaction evidence="1">
        <text>Release of an N-terminal amino acid, Xaa-|-Yaa-, in which Xaa is preferably Leu, but may be other amino acids including Pro although not Arg or Lys, and Yaa may be Pro. Amino acid amides and methyl esters are also readily hydrolyzed, but rates on arylamides are exceedingly low.</text>
        <dbReference type="EC" id="3.4.11.1"/>
    </reaction>
</comment>
<comment type="catalytic activity">
    <reaction evidence="1">
        <text>Release of an N-terminal amino acid, preferentially leucine, but not glutamic or aspartic acids.</text>
        <dbReference type="EC" id="3.4.11.10"/>
    </reaction>
</comment>
<comment type="cofactor">
    <cofactor evidence="1">
        <name>Mn(2+)</name>
        <dbReference type="ChEBI" id="CHEBI:29035"/>
    </cofactor>
    <text evidence="1">Binds 2 manganese ions per subunit.</text>
</comment>
<comment type="subcellular location">
    <subcellularLocation>
        <location evidence="1">Cytoplasm</location>
    </subcellularLocation>
</comment>
<comment type="similarity">
    <text evidence="1">Belongs to the peptidase M17 family.</text>
</comment>
<accession>A6VMX3</accession>
<name>AMPA_ACTSZ</name>
<organism>
    <name type="scientific">Actinobacillus succinogenes (strain ATCC 55618 / DSM 22257 / CCUG 43843 / 130Z)</name>
    <dbReference type="NCBI Taxonomy" id="339671"/>
    <lineage>
        <taxon>Bacteria</taxon>
        <taxon>Pseudomonadati</taxon>
        <taxon>Pseudomonadota</taxon>
        <taxon>Gammaproteobacteria</taxon>
        <taxon>Pasteurellales</taxon>
        <taxon>Pasteurellaceae</taxon>
        <taxon>Actinobacillus</taxon>
    </lineage>
</organism>
<reference key="1">
    <citation type="journal article" date="2010" name="BMC Genomics">
        <title>A genomic perspective on the potential of Actinobacillus succinogenes for industrial succinate production.</title>
        <authorList>
            <person name="McKinlay J.B."/>
            <person name="Laivenieks M."/>
            <person name="Schindler B.D."/>
            <person name="McKinlay A.A."/>
            <person name="Siddaramappa S."/>
            <person name="Challacombe J.F."/>
            <person name="Lowry S.R."/>
            <person name="Clum A."/>
            <person name="Lapidus A.L."/>
            <person name="Burkhart K.B."/>
            <person name="Harkins V."/>
            <person name="Vieille C."/>
        </authorList>
    </citation>
    <scope>NUCLEOTIDE SEQUENCE [LARGE SCALE GENOMIC DNA]</scope>
    <source>
        <strain>ATCC 55618 / DSM 22257 / CCUG 43843 / 130Z</strain>
    </source>
</reference>
<evidence type="ECO:0000255" key="1">
    <source>
        <dbReference type="HAMAP-Rule" id="MF_00181"/>
    </source>
</evidence>
<keyword id="KW-0031">Aminopeptidase</keyword>
<keyword id="KW-0963">Cytoplasm</keyword>
<keyword id="KW-0378">Hydrolase</keyword>
<keyword id="KW-0464">Manganese</keyword>
<keyword id="KW-0479">Metal-binding</keyword>
<keyword id="KW-0645">Protease</keyword>
<keyword id="KW-1185">Reference proteome</keyword>